<sequence>MAWIEPEVTEKPKKPMFLCVLSSTKTAHIPKLSAAGKTAELTDYTPAGDAELMETGNIISVPVLPMTPPYDTPTPAIMTRSALKLTDAPYHFINSGLIVTPDVPCIDLKANPGEDIREPVAVMDVQGIYERAKLLAKRLRNQADHVVIGESIPGGTTTAMGVLMALGYNGNVSSSADENPLELKKQVVEEGMKASGLTFGCLKDDPMKAIACMGDPMMPAVAGLVAGFQDTDTSVVLAGGTQMAAVYALIKHMGLNTEKIAIATTRYVVEDKSANFIQLTTTLGVPVVYVADPGFGKSSMKGLHRYETGTIKEGAGAGGAMYLAGLFGITQDQFRTEVENVCKLLKAGH</sequence>
<comment type="similarity">
    <text evidence="1">Belongs to the UPF0284 family.</text>
</comment>
<dbReference type="EMBL" id="AE008384">
    <property type="protein sequence ID" value="AAM30404.1"/>
    <property type="molecule type" value="Genomic_DNA"/>
</dbReference>
<dbReference type="SMR" id="Q8PYZ0"/>
<dbReference type="KEGG" id="mma:MM_0708"/>
<dbReference type="PATRIC" id="fig|192952.21.peg.844"/>
<dbReference type="eggNOG" id="arCOG04272">
    <property type="taxonomic scope" value="Archaea"/>
</dbReference>
<dbReference type="HOGENOM" id="CLU_053134_0_0_2"/>
<dbReference type="Proteomes" id="UP000000595">
    <property type="component" value="Chromosome"/>
</dbReference>
<dbReference type="GO" id="GO:0008939">
    <property type="term" value="F:nicotinate-nucleotide-dimethylbenzimidazole phosphoribosyltransferase activity"/>
    <property type="evidence" value="ECO:0007669"/>
    <property type="project" value="InterPro"/>
</dbReference>
<dbReference type="CDD" id="cd02439">
    <property type="entry name" value="DMB-PRT_CobT"/>
    <property type="match status" value="1"/>
</dbReference>
<dbReference type="Gene3D" id="3.40.50.10210">
    <property type="match status" value="1"/>
</dbReference>
<dbReference type="HAMAP" id="MF_01086">
    <property type="entry name" value="UPF0284"/>
    <property type="match status" value="1"/>
</dbReference>
<dbReference type="InterPro" id="IPR003200">
    <property type="entry name" value="Nict_dMeBzImd_PRibTrfase"/>
</dbReference>
<dbReference type="InterPro" id="IPR002805">
    <property type="entry name" value="Nict_dMeBzImd_PRibTrfase_arc"/>
</dbReference>
<dbReference type="InterPro" id="IPR036087">
    <property type="entry name" value="Nict_dMeBzImd_PRibTrfase_sf"/>
</dbReference>
<dbReference type="NCBIfam" id="TIGR00303">
    <property type="entry name" value="nicotinate mononucleotide-dependent phosphoribosyltransferase CobT"/>
    <property type="match status" value="1"/>
</dbReference>
<dbReference type="NCBIfam" id="NF003372">
    <property type="entry name" value="PRK04447.1-5"/>
    <property type="match status" value="1"/>
</dbReference>
<dbReference type="PANTHER" id="PTHR38811">
    <property type="match status" value="1"/>
</dbReference>
<dbReference type="PANTHER" id="PTHR38811:SF1">
    <property type="entry name" value="UPF0284 PROTEIN SLL1500"/>
    <property type="match status" value="1"/>
</dbReference>
<dbReference type="SUPFAM" id="SSF52733">
    <property type="entry name" value="Nicotinate mononucleotide:5,6-dimethylbenzimidazole phosphoribosyltransferase (CobT)"/>
    <property type="match status" value="1"/>
</dbReference>
<organism>
    <name type="scientific">Methanosarcina mazei (strain ATCC BAA-159 / DSM 3647 / Goe1 / Go1 / JCM 11833 / OCM 88)</name>
    <name type="common">Methanosarcina frisia</name>
    <dbReference type="NCBI Taxonomy" id="192952"/>
    <lineage>
        <taxon>Archaea</taxon>
        <taxon>Methanobacteriati</taxon>
        <taxon>Methanobacteriota</taxon>
        <taxon>Stenosarchaea group</taxon>
        <taxon>Methanomicrobia</taxon>
        <taxon>Methanosarcinales</taxon>
        <taxon>Methanosarcinaceae</taxon>
        <taxon>Methanosarcina</taxon>
    </lineage>
</organism>
<accession>Q8PYZ0</accession>
<feature type="chain" id="PRO_0000151053" description="UPF0284 protein MM_0708">
    <location>
        <begin position="1"/>
        <end position="349"/>
    </location>
</feature>
<protein>
    <recommendedName>
        <fullName evidence="1">UPF0284 protein MM_0708</fullName>
    </recommendedName>
</protein>
<proteinExistence type="inferred from homology"/>
<evidence type="ECO:0000255" key="1">
    <source>
        <dbReference type="HAMAP-Rule" id="MF_01086"/>
    </source>
</evidence>
<gene>
    <name type="ordered locus">MM_0708</name>
</gene>
<name>Y708_METMA</name>
<reference key="1">
    <citation type="journal article" date="2002" name="J. Mol. Microbiol. Biotechnol.">
        <title>The genome of Methanosarcina mazei: evidence for lateral gene transfer between Bacteria and Archaea.</title>
        <authorList>
            <person name="Deppenmeier U."/>
            <person name="Johann A."/>
            <person name="Hartsch T."/>
            <person name="Merkl R."/>
            <person name="Schmitz R.A."/>
            <person name="Martinez-Arias R."/>
            <person name="Henne A."/>
            <person name="Wiezer A."/>
            <person name="Baeumer S."/>
            <person name="Jacobi C."/>
            <person name="Brueggemann H."/>
            <person name="Lienard T."/>
            <person name="Christmann A."/>
            <person name="Boemecke M."/>
            <person name="Steckel S."/>
            <person name="Bhattacharyya A."/>
            <person name="Lykidis A."/>
            <person name="Overbeek R."/>
            <person name="Klenk H.-P."/>
            <person name="Gunsalus R.P."/>
            <person name="Fritz H.-J."/>
            <person name="Gottschalk G."/>
        </authorList>
    </citation>
    <scope>NUCLEOTIDE SEQUENCE [LARGE SCALE GENOMIC DNA]</scope>
    <source>
        <strain>ATCC BAA-159 / DSM 3647 / Goe1 / Go1 / JCM 11833 / OCM 88</strain>
    </source>
</reference>